<dbReference type="EC" id="2.7.10.1"/>
<dbReference type="EMBL" id="X61479">
    <property type="protein sequence ID" value="CAA43706.1"/>
    <property type="molecule type" value="mRNA"/>
</dbReference>
<dbReference type="PIR" id="I60321">
    <property type="entry name" value="S16385"/>
</dbReference>
<dbReference type="SMR" id="Q00495"/>
<dbReference type="FunCoup" id="Q00495">
    <property type="interactions" value="194"/>
</dbReference>
<dbReference type="STRING" id="10116.ENSRNOP00000040411"/>
<dbReference type="BindingDB" id="Q00495"/>
<dbReference type="GlyCosmos" id="Q00495">
    <property type="glycosylation" value="9 sites, No reported glycans"/>
</dbReference>
<dbReference type="GlyGen" id="Q00495">
    <property type="glycosylation" value="9 sites"/>
</dbReference>
<dbReference type="iPTMnet" id="Q00495"/>
<dbReference type="PhosphoSitePlus" id="Q00495"/>
<dbReference type="UCSC" id="RGD:2425">
    <property type="organism name" value="rat"/>
</dbReference>
<dbReference type="AGR" id="RGD:2425"/>
<dbReference type="RGD" id="2425">
    <property type="gene designation" value="Csf1r"/>
</dbReference>
<dbReference type="InParanoid" id="Q00495"/>
<dbReference type="PhylomeDB" id="Q00495"/>
<dbReference type="BRENDA" id="2.7.10.1">
    <property type="organism ID" value="5301"/>
</dbReference>
<dbReference type="Reactome" id="R-RNO-449836">
    <property type="pathway name" value="Other interleukin signaling"/>
</dbReference>
<dbReference type="PRO" id="PR:Q00495"/>
<dbReference type="Proteomes" id="UP000002494">
    <property type="component" value="Unplaced"/>
</dbReference>
<dbReference type="GO" id="GO:0044297">
    <property type="term" value="C:cell body"/>
    <property type="evidence" value="ECO:0000314"/>
    <property type="project" value="RGD"/>
</dbReference>
<dbReference type="GO" id="GO:0009986">
    <property type="term" value="C:cell surface"/>
    <property type="evidence" value="ECO:0000250"/>
    <property type="project" value="UniProtKB"/>
</dbReference>
<dbReference type="GO" id="GO:1990682">
    <property type="term" value="C:CSF1-CSF1R complex"/>
    <property type="evidence" value="ECO:0000266"/>
    <property type="project" value="RGD"/>
</dbReference>
<dbReference type="GO" id="GO:0016020">
    <property type="term" value="C:membrane"/>
    <property type="evidence" value="ECO:0000266"/>
    <property type="project" value="RGD"/>
</dbReference>
<dbReference type="GO" id="GO:0043204">
    <property type="term" value="C:perikaryon"/>
    <property type="evidence" value="ECO:0000314"/>
    <property type="project" value="RGD"/>
</dbReference>
<dbReference type="GO" id="GO:0005886">
    <property type="term" value="C:plasma membrane"/>
    <property type="evidence" value="ECO:0000266"/>
    <property type="project" value="RGD"/>
</dbReference>
<dbReference type="GO" id="GO:0043235">
    <property type="term" value="C:receptor complex"/>
    <property type="evidence" value="ECO:0000318"/>
    <property type="project" value="GO_Central"/>
</dbReference>
<dbReference type="GO" id="GO:0005524">
    <property type="term" value="F:ATP binding"/>
    <property type="evidence" value="ECO:0007669"/>
    <property type="project" value="UniProtKB-KW"/>
</dbReference>
<dbReference type="GO" id="GO:0019955">
    <property type="term" value="F:cytokine binding"/>
    <property type="evidence" value="ECO:0000250"/>
    <property type="project" value="UniProtKB"/>
</dbReference>
<dbReference type="GO" id="GO:0019838">
    <property type="term" value="F:growth factor binding"/>
    <property type="evidence" value="ECO:0000318"/>
    <property type="project" value="GO_Central"/>
</dbReference>
<dbReference type="GO" id="GO:0005011">
    <property type="term" value="F:macrophage colony-stimulating factor receptor activity"/>
    <property type="evidence" value="ECO:0000250"/>
    <property type="project" value="UniProtKB"/>
</dbReference>
<dbReference type="GO" id="GO:0042803">
    <property type="term" value="F:protein homodimerization activity"/>
    <property type="evidence" value="ECO:0000266"/>
    <property type="project" value="RGD"/>
</dbReference>
<dbReference type="GO" id="GO:0019903">
    <property type="term" value="F:protein phosphatase binding"/>
    <property type="evidence" value="ECO:0000353"/>
    <property type="project" value="RGD"/>
</dbReference>
<dbReference type="GO" id="GO:0004714">
    <property type="term" value="F:transmembrane receptor protein tyrosine kinase activity"/>
    <property type="evidence" value="ECO:0000266"/>
    <property type="project" value="RGD"/>
</dbReference>
<dbReference type="GO" id="GO:0007411">
    <property type="term" value="P:axon guidance"/>
    <property type="evidence" value="ECO:0000266"/>
    <property type="project" value="RGD"/>
</dbReference>
<dbReference type="GO" id="GO:0060038">
    <property type="term" value="P:cardiac muscle cell proliferation"/>
    <property type="evidence" value="ECO:0000270"/>
    <property type="project" value="RGD"/>
</dbReference>
<dbReference type="GO" id="GO:0016477">
    <property type="term" value="P:cell migration"/>
    <property type="evidence" value="ECO:0000318"/>
    <property type="project" value="GO_Central"/>
</dbReference>
<dbReference type="GO" id="GO:0008283">
    <property type="term" value="P:cell population proliferation"/>
    <property type="evidence" value="ECO:0000266"/>
    <property type="project" value="RGD"/>
</dbReference>
<dbReference type="GO" id="GO:0007169">
    <property type="term" value="P:cell surface receptor protein tyrosine kinase signaling pathway"/>
    <property type="evidence" value="ECO:0000250"/>
    <property type="project" value="UniProtKB"/>
</dbReference>
<dbReference type="GO" id="GO:0045217">
    <property type="term" value="P:cell-cell junction maintenance"/>
    <property type="evidence" value="ECO:0000266"/>
    <property type="project" value="RGD"/>
</dbReference>
<dbReference type="GO" id="GO:0071345">
    <property type="term" value="P:cellular response to cytokine stimulus"/>
    <property type="evidence" value="ECO:0000250"/>
    <property type="project" value="UniProtKB"/>
</dbReference>
<dbReference type="GO" id="GO:0036006">
    <property type="term" value="P:cellular response to macrophage colony-stimulating factor stimulus"/>
    <property type="evidence" value="ECO:0000270"/>
    <property type="project" value="RGD"/>
</dbReference>
<dbReference type="GO" id="GO:0071560">
    <property type="term" value="P:cellular response to transforming growth factor beta stimulus"/>
    <property type="evidence" value="ECO:0000270"/>
    <property type="project" value="RGD"/>
</dbReference>
<dbReference type="GO" id="GO:0071356">
    <property type="term" value="P:cellular response to tumor necrosis factor"/>
    <property type="evidence" value="ECO:0000270"/>
    <property type="project" value="RGD"/>
</dbReference>
<dbReference type="GO" id="GO:0019221">
    <property type="term" value="P:cytokine-mediated signaling pathway"/>
    <property type="evidence" value="ECO:0000266"/>
    <property type="project" value="RGD"/>
</dbReference>
<dbReference type="GO" id="GO:0021542">
    <property type="term" value="P:dentate gyrus development"/>
    <property type="evidence" value="ECO:0000315"/>
    <property type="project" value="RGD"/>
</dbReference>
<dbReference type="GO" id="GO:0021879">
    <property type="term" value="P:forebrain neuron differentiation"/>
    <property type="evidence" value="ECO:0000266"/>
    <property type="project" value="RGD"/>
</dbReference>
<dbReference type="GO" id="GO:0030097">
    <property type="term" value="P:hemopoiesis"/>
    <property type="evidence" value="ECO:0000266"/>
    <property type="project" value="RGD"/>
</dbReference>
<dbReference type="GO" id="GO:0045087">
    <property type="term" value="P:innate immune response"/>
    <property type="evidence" value="ECO:0007669"/>
    <property type="project" value="UniProtKB-KW"/>
</dbReference>
<dbReference type="GO" id="GO:0038145">
    <property type="term" value="P:macrophage colony-stimulating factor signaling pathway"/>
    <property type="evidence" value="ECO:0000266"/>
    <property type="project" value="RGD"/>
</dbReference>
<dbReference type="GO" id="GO:0014005">
    <property type="term" value="P:microglia development"/>
    <property type="evidence" value="ECO:0000315"/>
    <property type="project" value="RGD"/>
</dbReference>
<dbReference type="GO" id="GO:0001774">
    <property type="term" value="P:microglial cell activation"/>
    <property type="evidence" value="ECO:0000315"/>
    <property type="project" value="RGD"/>
</dbReference>
<dbReference type="GO" id="GO:0061518">
    <property type="term" value="P:microglial cell proliferation"/>
    <property type="evidence" value="ECO:0000314"/>
    <property type="project" value="RGD"/>
</dbReference>
<dbReference type="GO" id="GO:0035702">
    <property type="term" value="P:monocyte homeostasis"/>
    <property type="evidence" value="ECO:0000315"/>
    <property type="project" value="RGD"/>
</dbReference>
<dbReference type="GO" id="GO:1903131">
    <property type="term" value="P:mononuclear cell differentiation"/>
    <property type="evidence" value="ECO:0000270"/>
    <property type="project" value="RGD"/>
</dbReference>
<dbReference type="GO" id="GO:0051450">
    <property type="term" value="P:myoblast proliferation"/>
    <property type="evidence" value="ECO:0000270"/>
    <property type="project" value="RGD"/>
</dbReference>
<dbReference type="GO" id="GO:0043066">
    <property type="term" value="P:negative regulation of apoptotic process"/>
    <property type="evidence" value="ECO:0000266"/>
    <property type="project" value="RGD"/>
</dbReference>
<dbReference type="GO" id="GO:0008285">
    <property type="term" value="P:negative regulation of cell population proliferation"/>
    <property type="evidence" value="ECO:0000266"/>
    <property type="project" value="RGD"/>
</dbReference>
<dbReference type="GO" id="GO:0030857">
    <property type="term" value="P:negative regulation of epithelial cell differentiation"/>
    <property type="evidence" value="ECO:0000315"/>
    <property type="project" value="RGD"/>
</dbReference>
<dbReference type="GO" id="GO:0010832">
    <property type="term" value="P:negative regulation of myotube differentiation"/>
    <property type="evidence" value="ECO:0000315"/>
    <property type="project" value="RGD"/>
</dbReference>
<dbReference type="GO" id="GO:1905220">
    <property type="term" value="P:negative regulation of platelet formation"/>
    <property type="evidence" value="ECO:0000315"/>
    <property type="project" value="RGD"/>
</dbReference>
<dbReference type="GO" id="GO:1990138">
    <property type="term" value="P:neuron projection extension"/>
    <property type="evidence" value="ECO:0000315"/>
    <property type="project" value="RGD"/>
</dbReference>
<dbReference type="GO" id="GO:0001780">
    <property type="term" value="P:neutrophil homeostasis"/>
    <property type="evidence" value="ECO:0000315"/>
    <property type="project" value="RGD"/>
</dbReference>
<dbReference type="GO" id="GO:0021772">
    <property type="term" value="P:olfactory bulb development"/>
    <property type="evidence" value="ECO:0000266"/>
    <property type="project" value="RGD"/>
</dbReference>
<dbReference type="GO" id="GO:0030316">
    <property type="term" value="P:osteoclast differentiation"/>
    <property type="evidence" value="ECO:0007007"/>
    <property type="project" value="RGD"/>
</dbReference>
<dbReference type="GO" id="GO:0018108">
    <property type="term" value="P:peptidyl-tyrosine phosphorylation"/>
    <property type="evidence" value="ECO:0000250"/>
    <property type="project" value="UniProtKB"/>
</dbReference>
<dbReference type="GO" id="GO:0044794">
    <property type="term" value="P:positive regulation by host of viral process"/>
    <property type="evidence" value="ECO:0000266"/>
    <property type="project" value="RGD"/>
</dbReference>
<dbReference type="GO" id="GO:0061890">
    <property type="term" value="P:positive regulation of astrocyte activation"/>
    <property type="evidence" value="ECO:0000315"/>
    <property type="project" value="RGD"/>
</dbReference>
<dbReference type="GO" id="GO:0030501">
    <property type="term" value="P:positive regulation of bone mineralization"/>
    <property type="evidence" value="ECO:0000315"/>
    <property type="project" value="RGD"/>
</dbReference>
<dbReference type="GO" id="GO:1902808">
    <property type="term" value="P:positive regulation of cell cycle G1/S phase transition"/>
    <property type="evidence" value="ECO:0000315"/>
    <property type="project" value="RGD"/>
</dbReference>
<dbReference type="GO" id="GO:0030335">
    <property type="term" value="P:positive regulation of cell migration"/>
    <property type="evidence" value="ECO:0000318"/>
    <property type="project" value="GO_Central"/>
</dbReference>
<dbReference type="GO" id="GO:2000147">
    <property type="term" value="P:positive regulation of cell motility"/>
    <property type="evidence" value="ECO:0000266"/>
    <property type="project" value="RGD"/>
</dbReference>
<dbReference type="GO" id="GO:0008284">
    <property type="term" value="P:positive regulation of cell population proliferation"/>
    <property type="evidence" value="ECO:0000250"/>
    <property type="project" value="UniProtKB"/>
</dbReference>
<dbReference type="GO" id="GO:0032722">
    <property type="term" value="P:positive regulation of chemokine production"/>
    <property type="evidence" value="ECO:0000266"/>
    <property type="project" value="RGD"/>
</dbReference>
<dbReference type="GO" id="GO:0070374">
    <property type="term" value="P:positive regulation of ERK1 and ERK2 cascade"/>
    <property type="evidence" value="ECO:0000250"/>
    <property type="project" value="UniProtKB"/>
</dbReference>
<dbReference type="GO" id="GO:0010628">
    <property type="term" value="P:positive regulation of gene expression"/>
    <property type="evidence" value="ECO:0000315"/>
    <property type="project" value="RGD"/>
</dbReference>
<dbReference type="GO" id="GO:0070665">
    <property type="term" value="P:positive regulation of leukocyte proliferation"/>
    <property type="evidence" value="ECO:0000315"/>
    <property type="project" value="RGD"/>
</dbReference>
<dbReference type="GO" id="GO:0050671">
    <property type="term" value="P:positive regulation of lymphocyte proliferation"/>
    <property type="evidence" value="ECO:0000315"/>
    <property type="project" value="RGD"/>
</dbReference>
<dbReference type="GO" id="GO:0010759">
    <property type="term" value="P:positive regulation of macrophage chemotaxis"/>
    <property type="evidence" value="ECO:0000266"/>
    <property type="project" value="RGD"/>
</dbReference>
<dbReference type="GO" id="GO:1905523">
    <property type="term" value="P:positive regulation of macrophage migration"/>
    <property type="evidence" value="ECO:0000315"/>
    <property type="project" value="RGD"/>
</dbReference>
<dbReference type="GO" id="GO:0120041">
    <property type="term" value="P:positive regulation of macrophage proliferation"/>
    <property type="evidence" value="ECO:0000315"/>
    <property type="project" value="RGD"/>
</dbReference>
<dbReference type="GO" id="GO:2000288">
    <property type="term" value="P:positive regulation of myoblast proliferation"/>
    <property type="evidence" value="ECO:0000315"/>
    <property type="project" value="RGD"/>
</dbReference>
<dbReference type="GO" id="GO:0045672">
    <property type="term" value="P:positive regulation of osteoclast differentiation"/>
    <property type="evidence" value="ECO:0000315"/>
    <property type="project" value="RGD"/>
</dbReference>
<dbReference type="GO" id="GO:0051897">
    <property type="term" value="P:positive regulation of phosphatidylinositol 3-kinase/protein kinase B signal transduction"/>
    <property type="evidence" value="ECO:0000250"/>
    <property type="project" value="UniProtKB"/>
</dbReference>
<dbReference type="GO" id="GO:0032760">
    <property type="term" value="P:positive regulation of tumor necrosis factor production"/>
    <property type="evidence" value="ECO:0000315"/>
    <property type="project" value="RGD"/>
</dbReference>
<dbReference type="GO" id="GO:0042531">
    <property type="term" value="P:positive regulation of tyrosine phosphorylation of STAT protein"/>
    <property type="evidence" value="ECO:0000250"/>
    <property type="project" value="UniProtKB"/>
</dbReference>
<dbReference type="GO" id="GO:0046777">
    <property type="term" value="P:protein autophosphorylation"/>
    <property type="evidence" value="ECO:0000250"/>
    <property type="project" value="UniProtKB"/>
</dbReference>
<dbReference type="GO" id="GO:0032956">
    <property type="term" value="P:regulation of actin cytoskeleton organization"/>
    <property type="evidence" value="ECO:0000250"/>
    <property type="project" value="UniProtKB"/>
</dbReference>
<dbReference type="GO" id="GO:0045124">
    <property type="term" value="P:regulation of bone resorption"/>
    <property type="evidence" value="ECO:0000315"/>
    <property type="project" value="UniProtKB"/>
</dbReference>
<dbReference type="GO" id="GO:0008360">
    <property type="term" value="P:regulation of cell shape"/>
    <property type="evidence" value="ECO:0000250"/>
    <property type="project" value="UniProtKB"/>
</dbReference>
<dbReference type="GO" id="GO:1905521">
    <property type="term" value="P:regulation of macrophage migration"/>
    <property type="evidence" value="ECO:0000250"/>
    <property type="project" value="UniProtKB"/>
</dbReference>
<dbReference type="GO" id="GO:0043408">
    <property type="term" value="P:regulation of MAPK cascade"/>
    <property type="evidence" value="ECO:0000318"/>
    <property type="project" value="GO_Central"/>
</dbReference>
<dbReference type="GO" id="GO:0032944">
    <property type="term" value="P:regulation of mononuclear cell proliferation"/>
    <property type="evidence" value="ECO:0000315"/>
    <property type="project" value="RGD"/>
</dbReference>
<dbReference type="GO" id="GO:0048678">
    <property type="term" value="P:response to axon injury"/>
    <property type="evidence" value="ECO:0000270"/>
    <property type="project" value="RGD"/>
</dbReference>
<dbReference type="GO" id="GO:0001666">
    <property type="term" value="P:response to hypoxia"/>
    <property type="evidence" value="ECO:0000270"/>
    <property type="project" value="RGD"/>
</dbReference>
<dbReference type="GO" id="GO:0002931">
    <property type="term" value="P:response to ischemia"/>
    <property type="evidence" value="ECO:0000266"/>
    <property type="project" value="RGD"/>
</dbReference>
<dbReference type="GO" id="GO:0032496">
    <property type="term" value="P:response to lipopolysaccharide"/>
    <property type="evidence" value="ECO:0000270"/>
    <property type="project" value="RGD"/>
</dbReference>
<dbReference type="GO" id="GO:0009612">
    <property type="term" value="P:response to mechanical stimulus"/>
    <property type="evidence" value="ECO:0000270"/>
    <property type="project" value="RGD"/>
</dbReference>
<dbReference type="GO" id="GO:0031529">
    <property type="term" value="P:ruffle organization"/>
    <property type="evidence" value="ECO:0000250"/>
    <property type="project" value="UniProtKB"/>
</dbReference>
<dbReference type="GO" id="GO:0014856">
    <property type="term" value="P:skeletal muscle cell proliferation"/>
    <property type="evidence" value="ECO:0000270"/>
    <property type="project" value="RGD"/>
</dbReference>
<dbReference type="GO" id="GO:0007519">
    <property type="term" value="P:skeletal muscle tissue development"/>
    <property type="evidence" value="ECO:0000270"/>
    <property type="project" value="RGD"/>
</dbReference>
<dbReference type="CDD" id="cd05106">
    <property type="entry name" value="PTKc_CSF-1R"/>
    <property type="match status" value="1"/>
</dbReference>
<dbReference type="FunFam" id="2.60.40.10:FF:001029">
    <property type="entry name" value="Macrophage colony-stimulating factor 1 receptor"/>
    <property type="match status" value="1"/>
</dbReference>
<dbReference type="FunFam" id="2.60.40.10:FF:001088">
    <property type="entry name" value="Macrophage colony-stimulating factor 1 receptor"/>
    <property type="match status" value="1"/>
</dbReference>
<dbReference type="FunFam" id="2.60.40.10:FF:001101">
    <property type="entry name" value="Macrophage colony-stimulating factor 1 receptor"/>
    <property type="match status" value="1"/>
</dbReference>
<dbReference type="FunFam" id="2.60.40.10:FF:001160">
    <property type="entry name" value="Macrophage colony-stimulating factor 1 receptor"/>
    <property type="match status" value="1"/>
</dbReference>
<dbReference type="FunFam" id="2.60.40.10:FF:001169">
    <property type="entry name" value="Macrophage colony-stimulating factor 1 receptor"/>
    <property type="match status" value="1"/>
</dbReference>
<dbReference type="FunFam" id="1.10.510.10:FF:000177">
    <property type="entry name" value="Mast/stem cell growth factor receptor"/>
    <property type="match status" value="1"/>
</dbReference>
<dbReference type="FunFam" id="3.30.200.20:FF:000025">
    <property type="entry name" value="Platelet-derived growth factor receptor alpha"/>
    <property type="match status" value="1"/>
</dbReference>
<dbReference type="Gene3D" id="2.60.40.10">
    <property type="entry name" value="Immunoglobulins"/>
    <property type="match status" value="5"/>
</dbReference>
<dbReference type="Gene3D" id="3.30.200.20">
    <property type="entry name" value="Phosphorylase Kinase, domain 1"/>
    <property type="match status" value="1"/>
</dbReference>
<dbReference type="Gene3D" id="1.10.510.10">
    <property type="entry name" value="Transferase(Phosphotransferase) domain 1"/>
    <property type="match status" value="1"/>
</dbReference>
<dbReference type="InterPro" id="IPR030658">
    <property type="entry name" value="CSF-1_receptor"/>
</dbReference>
<dbReference type="InterPro" id="IPR007110">
    <property type="entry name" value="Ig-like_dom"/>
</dbReference>
<dbReference type="InterPro" id="IPR036179">
    <property type="entry name" value="Ig-like_dom_sf"/>
</dbReference>
<dbReference type="InterPro" id="IPR013783">
    <property type="entry name" value="Ig-like_fold"/>
</dbReference>
<dbReference type="InterPro" id="IPR003599">
    <property type="entry name" value="Ig_sub"/>
</dbReference>
<dbReference type="InterPro" id="IPR003598">
    <property type="entry name" value="Ig_sub2"/>
</dbReference>
<dbReference type="InterPro" id="IPR013151">
    <property type="entry name" value="Immunoglobulin_dom"/>
</dbReference>
<dbReference type="InterPro" id="IPR011009">
    <property type="entry name" value="Kinase-like_dom_sf"/>
</dbReference>
<dbReference type="InterPro" id="IPR000719">
    <property type="entry name" value="Prot_kinase_dom"/>
</dbReference>
<dbReference type="InterPro" id="IPR017441">
    <property type="entry name" value="Protein_kinase_ATP_BS"/>
</dbReference>
<dbReference type="InterPro" id="IPR050122">
    <property type="entry name" value="RTK"/>
</dbReference>
<dbReference type="InterPro" id="IPR001245">
    <property type="entry name" value="Ser-Thr/Tyr_kinase_cat_dom"/>
</dbReference>
<dbReference type="InterPro" id="IPR008266">
    <property type="entry name" value="Tyr_kinase_AS"/>
</dbReference>
<dbReference type="InterPro" id="IPR020635">
    <property type="entry name" value="Tyr_kinase_cat_dom"/>
</dbReference>
<dbReference type="InterPro" id="IPR001824">
    <property type="entry name" value="Tyr_kinase_rcpt_3_CS"/>
</dbReference>
<dbReference type="PANTHER" id="PTHR24416:SF47">
    <property type="entry name" value="MACROPHAGE COLONY-STIMULATING FACTOR 1 RECEPTOR"/>
    <property type="match status" value="1"/>
</dbReference>
<dbReference type="PANTHER" id="PTHR24416">
    <property type="entry name" value="TYROSINE-PROTEIN KINASE RECEPTOR"/>
    <property type="match status" value="1"/>
</dbReference>
<dbReference type="Pfam" id="PF00047">
    <property type="entry name" value="ig"/>
    <property type="match status" value="1"/>
</dbReference>
<dbReference type="Pfam" id="PF25305">
    <property type="entry name" value="Ig_PDGFR_d4"/>
    <property type="match status" value="1"/>
</dbReference>
<dbReference type="Pfam" id="PF07714">
    <property type="entry name" value="PK_Tyr_Ser-Thr"/>
    <property type="match status" value="1"/>
</dbReference>
<dbReference type="PIRSF" id="PIRSF500947">
    <property type="entry name" value="CSF-1_receptor"/>
    <property type="match status" value="1"/>
</dbReference>
<dbReference type="PIRSF" id="PIRSF000615">
    <property type="entry name" value="TyrPK_CSF1-R"/>
    <property type="match status" value="1"/>
</dbReference>
<dbReference type="SMART" id="SM00409">
    <property type="entry name" value="IG"/>
    <property type="match status" value="5"/>
</dbReference>
<dbReference type="SMART" id="SM00408">
    <property type="entry name" value="IGc2"/>
    <property type="match status" value="2"/>
</dbReference>
<dbReference type="SMART" id="SM00219">
    <property type="entry name" value="TyrKc"/>
    <property type="match status" value="1"/>
</dbReference>
<dbReference type="SUPFAM" id="SSF48726">
    <property type="entry name" value="Immunoglobulin"/>
    <property type="match status" value="5"/>
</dbReference>
<dbReference type="SUPFAM" id="SSF56112">
    <property type="entry name" value="Protein kinase-like (PK-like)"/>
    <property type="match status" value="1"/>
</dbReference>
<dbReference type="PROSITE" id="PS50835">
    <property type="entry name" value="IG_LIKE"/>
    <property type="match status" value="4"/>
</dbReference>
<dbReference type="PROSITE" id="PS00107">
    <property type="entry name" value="PROTEIN_KINASE_ATP"/>
    <property type="match status" value="1"/>
</dbReference>
<dbReference type="PROSITE" id="PS50011">
    <property type="entry name" value="PROTEIN_KINASE_DOM"/>
    <property type="match status" value="1"/>
</dbReference>
<dbReference type="PROSITE" id="PS00109">
    <property type="entry name" value="PROTEIN_KINASE_TYR"/>
    <property type="match status" value="1"/>
</dbReference>
<dbReference type="PROSITE" id="PS00240">
    <property type="entry name" value="RECEPTOR_TYR_KIN_III"/>
    <property type="match status" value="1"/>
</dbReference>
<proteinExistence type="evidence at protein level"/>
<accession>Q00495</accession>
<comment type="function">
    <text evidence="2 9">Tyrosine-protein kinase that acts as a cell-surface receptor for CSF1 and IL34 and plays an essential role in the regulation of survival, proliferation and differentiation of hematopoietic precursor cells, especially mononuclear phagocytes, such as macrophages and monocytes. Promotes the release of pro-inflammatory chemokines in response to IL34 and CSF1, and thereby plays an important role in innate immunity and in inflammatory processes. Plays an important role in the regulation of osteoclast proliferation and differentiation, the regulation of bone resorption, and is required for normal bone and tooth development. Required for normal male and female fertility, and for normal development of milk ducts and acinar structures in the mammary gland during pregnancy. Promotes reorganization of the actin cytoskeleton, regulates formation of membrane ruffles, cell adhesion and cell migration, and promotes cancer cell invasion. Activates several signaling pathways in response to ligand binding, including the ERK1/2 and the JNK pathway (By similarity). Phosphorylates PIK3R1, PLCG2, GRB2, SLA2 and CBL. Activation of PLCG2 leads to the production of the cellular signaling molecules diacylglycerol and inositol 1,4,5-trisphosphate, that then lead to the activation of protein kinase C family members, especially PRKCD. Phosphorylation of PIK3R1, the regulatory subunit of phosphatidylinositol 3-kinase, leads to activation of the AKT1 signaling pathway. Activated CSF1R also mediates activation of the MAP kinases MAPK1/ERK2 and/or MAPK3/ERK1, and of the SRC family kinases SRC, FYN and YES1. Activated CSF1R transmits signals both via proteins that directly interact with phosphorylated tyrosine residues in its intracellular domain, or via adapter proteins, such as GRB2. Promotes activation of STAT family members STAT3, STAT5A and/or STAT5B. Promotes tyrosine phosphorylation of SHC1 and INPP5D/SHIP-1. Receptor signaling is down-regulated by protein phosphatases, such as INPP5D/SHIP-1, that dephosphorylate the receptor and its downstream effectors, and by rapid internalization of the activated receptor (By similarity). In the central nervous system, may play a role in the development of microglia macrophages (By similarity).</text>
</comment>
<comment type="catalytic activity">
    <reaction evidence="7">
        <text>L-tyrosyl-[protein] + ATP = O-phospho-L-tyrosyl-[protein] + ADP + H(+)</text>
        <dbReference type="Rhea" id="RHEA:10596"/>
        <dbReference type="Rhea" id="RHEA-COMP:10136"/>
        <dbReference type="Rhea" id="RHEA-COMP:20101"/>
        <dbReference type="ChEBI" id="CHEBI:15378"/>
        <dbReference type="ChEBI" id="CHEBI:30616"/>
        <dbReference type="ChEBI" id="CHEBI:46858"/>
        <dbReference type="ChEBI" id="CHEBI:61978"/>
        <dbReference type="ChEBI" id="CHEBI:456216"/>
        <dbReference type="EC" id="2.7.10.1"/>
    </reaction>
</comment>
<comment type="activity regulation">
    <text evidence="1">Present in an inactive conformation in the absence of bound ligand. CSF1 or IL34 binding leads to dimerization and activation by autophosphorylation on tyrosine residues (By similarity).</text>
</comment>
<comment type="subunit">
    <text evidence="1">Monomer. Homodimer. Interacts with CSF1 and IL34. Interaction with dimeric CSF1 or IL34 leads to receptor homodimerization. Interacts with INPPL1/SHIP2 and THOC5. Interacts (tyrosine phosphorylated) with PLCG2 (via SH2 domain). Interacts (tyrosine phosphorylated) with PIK3R1 (via SH2 domain). Interacts (tyrosine phosphorylated) with FYN, YES1 and SRC (via SH2 domain). Interacts (tyrosine phosphorylated) with CBL, GRB2 and SLA2 (By similarity).</text>
</comment>
<comment type="subcellular location">
    <subcellularLocation>
        <location>Cell membrane</location>
        <topology>Single-pass type I membrane protein</topology>
    </subcellularLocation>
    <text evidence="1">The autophosphorylated receptor is ubiquitinated and internalized, leading to its degradation.</text>
</comment>
<comment type="domain">
    <text evidence="1">The juxtamembrane domain functions as autoinhibitory region. Phosphorylation of tyrosine residues in this region leads to a conformation change and activation of the kinase (By similarity).</text>
</comment>
<comment type="domain">
    <text evidence="1">The activation loop plays an important role in the regulation of kinase activity. Phosphorylation of tyrosine residues in this region leads to a conformation change and activation of the kinase (By similarity).</text>
</comment>
<comment type="PTM">
    <text evidence="1">Autophosphorylated in response to CSF1 or IL34 binding. Phosphorylation at Tyr-559 is important for normal down-regulation of signaling by ubiquitination, internalization and degradation. Phosphorylation at Tyr-559 and Tyr-807 is important for interaction with SRC family members, including FYN, YES1 and SRC, and for subsequent activation of these protein kinases. Phosphorylation at Tyr-697 and Tyr-921 is important for interaction with GRB2. Phosphorylation at Tyr-721 is important for interaction with PIK3R1. Phosphorylation at Tyr-721 and Tyr-807 is important for interaction with PLCG2. Phosphorylation at Tyr-974 is important for interaction with CBL. Dephosphorylation by PTPN2 negatively regulates downstream signaling and macrophage differentiation (By similarity).</text>
</comment>
<comment type="PTM">
    <text evidence="1">Ubiquitinated. Becomes rapidly polyubiquitinated after autophosphorylation, leading to its degradation (By similarity).</text>
</comment>
<comment type="similarity">
    <text evidence="6">Belongs to the protein kinase superfamily. Tyr protein kinase family. CSF-1/PDGF receptor subfamily.</text>
</comment>
<keyword id="KW-0067">ATP-binding</keyword>
<keyword id="KW-1003">Cell membrane</keyword>
<keyword id="KW-1015">Disulfide bond</keyword>
<keyword id="KW-0325">Glycoprotein</keyword>
<keyword id="KW-0391">Immunity</keyword>
<keyword id="KW-0393">Immunoglobulin domain</keyword>
<keyword id="KW-0395">Inflammatory response</keyword>
<keyword id="KW-0399">Innate immunity</keyword>
<keyword id="KW-0418">Kinase</keyword>
<keyword id="KW-0472">Membrane</keyword>
<keyword id="KW-0547">Nucleotide-binding</keyword>
<keyword id="KW-0597">Phosphoprotein</keyword>
<keyword id="KW-0656">Proto-oncogene</keyword>
<keyword id="KW-0675">Receptor</keyword>
<keyword id="KW-1185">Reference proteome</keyword>
<keyword id="KW-0677">Repeat</keyword>
<keyword id="KW-0732">Signal</keyword>
<keyword id="KW-0808">Transferase</keyword>
<keyword id="KW-0812">Transmembrane</keyword>
<keyword id="KW-1133">Transmembrane helix</keyword>
<keyword id="KW-0829">Tyrosine-protein kinase</keyword>
<keyword id="KW-0832">Ubl conjugation</keyword>
<sequence>MELGPPLVLLLATVWHGQGAPVIEPSGPELVVEPGETVTLRCVSNGSVEWDGPISPYWTLDPESPGSTLTTRNATFKNTGTYRCTELEDPMAGSTTIHLYVKDPAHSWNLLAQEVTVVEGQEAVLPCLITDPALKDSVSLMREGGRQVLRKTVYFFSAWRGFIIRKAKVLDSNTYVCKTMVNGRESTSTGIWLKVNRVHPEPPQIKLEPSKLVRIRGEAAQIVCSATNAEVGFNVILKRGDTKLEIPLNSDFQDNYYKKVRALSLNAVDFQDAGIYSCVASNDVGTRTATMNFQVVESAYLNLTSEQSLLQEVSVGDSLILTVHADAYPSIQHYNWTYLGPFFEDQRKLEFITQRAIYRYTFKLFLNRVKASEAGQYFLMAQNKAGWNNLTFELTLRYPPEVSVTWMPVNGSDVLFCDVSGYPQPSVTWMECRGHTDRCDEAQALQVWNDTHPEVLSQKPFDKVIIQSQLPIGTLKHNMTYFCKTHNSVGNSSQYFRAVSLGQSKQLPDESLFTPVVVACMSVMSLLVLLLLLLLYKYKQKPKYQVRWKIIERYEGNSYTFIDPTQLPYNEKWEFPRNNLQFGKTLGAGAFGKVVEATAFGLGKEDAVLKVAVKMLKSTAHADEKEALMSELKIMSHLGQHENIVNLLGACTHGGPVLVITEYCCYGDLLNFLRRKAEAMLGPSLSPGQDSEGDSSYKNIHLEKKYVRRDSGFSSQGVDTYVEMRPVSTSSSDSFFKQDLDKEPSRPLELWDLLHFSSQVAQGMAFLASKNCIHRDVAARNVLLTSGHVAKIGDFGLARDIMNDSNYVVKGNARLPVKWMAPESILYCVYTVQSDVWSYGILLWEIFSLGLNPYPGILVNNKFYKLVKDGYQMAQPVFAPKNIYSIMQSCWDLEPTRRPTFQQICFLLQEQARLERRDQDYANLPSSGGSSGSDSGGGSSGGSSSEPEEESSSEHLACCEPGDIAQPLLQPNNYQFAC</sequence>
<evidence type="ECO:0000250" key="1"/>
<evidence type="ECO:0000250" key="2">
    <source>
        <dbReference type="UniProtKB" id="P07333"/>
    </source>
</evidence>
<evidence type="ECO:0000250" key="3">
    <source>
        <dbReference type="UniProtKB" id="P09581"/>
    </source>
</evidence>
<evidence type="ECO:0000255" key="4"/>
<evidence type="ECO:0000255" key="5">
    <source>
        <dbReference type="PROSITE-ProRule" id="PRU00114"/>
    </source>
</evidence>
<evidence type="ECO:0000255" key="6">
    <source>
        <dbReference type="PROSITE-ProRule" id="PRU00159"/>
    </source>
</evidence>
<evidence type="ECO:0000255" key="7">
    <source>
        <dbReference type="PROSITE-ProRule" id="PRU10028"/>
    </source>
</evidence>
<evidence type="ECO:0000256" key="8">
    <source>
        <dbReference type="SAM" id="MobiDB-lite"/>
    </source>
</evidence>
<evidence type="ECO:0000269" key="9">
    <source>
    </source>
</evidence>
<feature type="signal peptide" evidence="1">
    <location>
        <begin position="1"/>
        <end position="19"/>
    </location>
</feature>
<feature type="chain" id="PRO_0000016767" description="Macrophage colony-stimulating factor 1 receptor">
    <location>
        <begin position="20"/>
        <end position="978"/>
    </location>
</feature>
<feature type="topological domain" description="Extracellular" evidence="4">
    <location>
        <begin position="20"/>
        <end position="515"/>
    </location>
</feature>
<feature type="transmembrane region" description="Helical" evidence="4">
    <location>
        <begin position="516"/>
        <end position="536"/>
    </location>
</feature>
<feature type="topological domain" description="Cytoplasmic" evidence="4">
    <location>
        <begin position="537"/>
        <end position="978"/>
    </location>
</feature>
<feature type="domain" description="Ig-like C2-type 1">
    <location>
        <begin position="24"/>
        <end position="104"/>
    </location>
</feature>
<feature type="domain" description="Ig-like C2-type 2">
    <location>
        <begin position="107"/>
        <end position="197"/>
    </location>
</feature>
<feature type="domain" description="Ig-like C2-type 3">
    <location>
        <begin position="204"/>
        <end position="298"/>
    </location>
</feature>
<feature type="domain" description="Ig-like C2-type 4">
    <location>
        <begin position="299"/>
        <end position="397"/>
    </location>
</feature>
<feature type="domain" description="Ig-like C2-type 5">
    <location>
        <begin position="398"/>
        <end position="503"/>
    </location>
</feature>
<feature type="domain" description="Protein kinase" evidence="6">
    <location>
        <begin position="580"/>
        <end position="914"/>
    </location>
</feature>
<feature type="region of interest" description="Regulatory juxtamembrane domain" evidence="1">
    <location>
        <begin position="540"/>
        <end position="572"/>
    </location>
</feature>
<feature type="region of interest" description="Activation loop" evidence="1">
    <location>
        <begin position="794"/>
        <end position="816"/>
    </location>
</feature>
<feature type="region of interest" description="Disordered" evidence="8">
    <location>
        <begin position="921"/>
        <end position="957"/>
    </location>
</feature>
<feature type="compositionally biased region" description="Gly residues" evidence="8">
    <location>
        <begin position="929"/>
        <end position="941"/>
    </location>
</feature>
<feature type="active site" description="Proton acceptor" evidence="6 7">
    <location>
        <position position="776"/>
    </location>
</feature>
<feature type="binding site" evidence="6">
    <location>
        <begin position="586"/>
        <end position="594"/>
    </location>
    <ligand>
        <name>ATP</name>
        <dbReference type="ChEBI" id="CHEBI:30616"/>
    </ligand>
</feature>
<feature type="binding site" evidence="6">
    <location>
        <position position="614"/>
    </location>
    <ligand>
        <name>ATP</name>
        <dbReference type="ChEBI" id="CHEBI:30616"/>
    </ligand>
</feature>
<feature type="modified residue" description="Phosphotyrosine; by autocatalysis" evidence="2">
    <location>
        <position position="544"/>
    </location>
</feature>
<feature type="modified residue" description="Phosphotyrosine; by autocatalysis" evidence="3">
    <location>
        <position position="559"/>
    </location>
</feature>
<feature type="modified residue" description="Phosphotyrosine; by autocatalysis" evidence="2">
    <location>
        <position position="697"/>
    </location>
</feature>
<feature type="modified residue" description="Phosphotyrosine; by autocatalysis" evidence="2">
    <location>
        <position position="706"/>
    </location>
</feature>
<feature type="modified residue" description="Phosphoserine" evidence="2">
    <location>
        <position position="711"/>
    </location>
</feature>
<feature type="modified residue" description="Phosphotyrosine; by autocatalysis" evidence="2">
    <location>
        <position position="721"/>
    </location>
</feature>
<feature type="modified residue" description="Phosphotyrosine; by autocatalysis" evidence="2">
    <location>
        <position position="807"/>
    </location>
</feature>
<feature type="modified residue" description="Phosphotyrosine; by autocatalysis" evidence="3">
    <location>
        <position position="921"/>
    </location>
</feature>
<feature type="modified residue" description="Phosphotyrosine; by autocatalysis" evidence="3">
    <location>
        <position position="974"/>
    </location>
</feature>
<feature type="glycosylation site" description="N-linked (GlcNAc...) asparagine" evidence="4">
    <location>
        <position position="45"/>
    </location>
</feature>
<feature type="glycosylation site" description="N-linked (GlcNAc...) asparagine" evidence="4">
    <location>
        <position position="73"/>
    </location>
</feature>
<feature type="glycosylation site" description="N-linked (GlcNAc...) asparagine" evidence="4">
    <location>
        <position position="302"/>
    </location>
</feature>
<feature type="glycosylation site" description="N-linked (GlcNAc...) asparagine" evidence="4">
    <location>
        <position position="335"/>
    </location>
</feature>
<feature type="glycosylation site" description="N-linked (GlcNAc...) asparagine" evidence="4">
    <location>
        <position position="389"/>
    </location>
</feature>
<feature type="glycosylation site" description="N-linked (GlcNAc...) asparagine" evidence="4">
    <location>
        <position position="410"/>
    </location>
</feature>
<feature type="glycosylation site" description="N-linked (GlcNAc...) asparagine" evidence="4">
    <location>
        <position position="449"/>
    </location>
</feature>
<feature type="glycosylation site" description="N-linked (GlcNAc...) asparagine" evidence="4">
    <location>
        <position position="478"/>
    </location>
</feature>
<feature type="glycosylation site" description="N-linked (GlcNAc...) asparagine" evidence="4">
    <location>
        <position position="491"/>
    </location>
</feature>
<feature type="disulfide bond" evidence="5">
    <location>
        <begin position="42"/>
        <end position="84"/>
    </location>
</feature>
<feature type="disulfide bond" evidence="5">
    <location>
        <begin position="127"/>
        <end position="177"/>
    </location>
</feature>
<feature type="disulfide bond" evidence="5">
    <location>
        <begin position="224"/>
        <end position="278"/>
    </location>
</feature>
<feature type="disulfide bond" evidence="5">
    <location>
        <begin position="417"/>
        <end position="483"/>
    </location>
</feature>
<name>CSF1R_RAT</name>
<organism>
    <name type="scientific">Rattus norvegicus</name>
    <name type="common">Rat</name>
    <dbReference type="NCBI Taxonomy" id="10116"/>
    <lineage>
        <taxon>Eukaryota</taxon>
        <taxon>Metazoa</taxon>
        <taxon>Chordata</taxon>
        <taxon>Craniata</taxon>
        <taxon>Vertebrata</taxon>
        <taxon>Euteleostomi</taxon>
        <taxon>Mammalia</taxon>
        <taxon>Eutheria</taxon>
        <taxon>Euarchontoglires</taxon>
        <taxon>Glires</taxon>
        <taxon>Rodentia</taxon>
        <taxon>Myomorpha</taxon>
        <taxon>Muroidea</taxon>
        <taxon>Muridae</taxon>
        <taxon>Murinae</taxon>
        <taxon>Rattus</taxon>
    </lineage>
</organism>
<reference key="1">
    <citation type="journal article" date="1992" name="Growth Factors">
        <title>Molecular cloning of CSF-1 receptor from rat myoblasts. Sequence analysis and regulation during myogenesis.</title>
        <authorList>
            <person name="Borycki A.G."/>
            <person name="Guillier M."/>
            <person name="Leibovitch M.P."/>
            <person name="Leibovitch S.A."/>
        </authorList>
    </citation>
    <scope>NUCLEOTIDE SEQUENCE [MRNA]</scope>
    <source>
        <strain>Wistar</strain>
        <tissue>Skeletal muscle</tissue>
    </source>
</reference>
<reference key="2">
    <citation type="journal article" date="2006" name="Mol. Cancer Ther.">
        <title>A c-fms tyrosine kinase inhibitor, Ki20227, suppresses osteoclast differentiation and osteolytic bone destruction in a bone metastasis model.</title>
        <authorList>
            <person name="Ohno H."/>
            <person name="Kubo K."/>
            <person name="Murooka H."/>
            <person name="Kobayashi Y."/>
            <person name="Nishitoba T."/>
            <person name="Shibuya M."/>
            <person name="Yoneda T."/>
            <person name="Isoe T."/>
        </authorList>
    </citation>
    <scope>FUNCTION IN BONE RESORPTION</scope>
</reference>
<gene>
    <name type="primary">Csf1r</name>
    <name type="synonym">Csfmr</name>
    <name type="synonym">Fms</name>
</gene>
<protein>
    <recommendedName>
        <fullName>Macrophage colony-stimulating factor 1 receptor</fullName>
    </recommendedName>
    <alternativeName>
        <fullName>CSF-1 receptor</fullName>
        <shortName>CSF-1-R</shortName>
        <shortName>CSF-1R</shortName>
        <shortName>M-CSF-R</shortName>
        <ecNumber>2.7.10.1</ecNumber>
    </alternativeName>
    <alternativeName>
        <fullName>Proto-oncogene c-Fms</fullName>
    </alternativeName>
    <cdAntigenName>CD115</cdAntigenName>
</protein>